<gene>
    <name evidence="1" type="primary">recR</name>
    <name type="ordered locus">CYA_1368</name>
</gene>
<comment type="function">
    <text evidence="1">May play a role in DNA repair. It seems to be involved in an RecBC-independent recombinational process of DNA repair. It may act with RecF and RecO.</text>
</comment>
<comment type="similarity">
    <text evidence="1">Belongs to the RecR family.</text>
</comment>
<protein>
    <recommendedName>
        <fullName evidence="1">Recombination protein RecR</fullName>
    </recommendedName>
</protein>
<feature type="chain" id="PRO_0000322961" description="Recombination protein RecR">
    <location>
        <begin position="1"/>
        <end position="199"/>
    </location>
</feature>
<feature type="domain" description="Toprim" evidence="1">
    <location>
        <begin position="79"/>
        <end position="174"/>
    </location>
</feature>
<feature type="zinc finger region" description="C4-type" evidence="1">
    <location>
        <begin position="56"/>
        <end position="71"/>
    </location>
</feature>
<dbReference type="EMBL" id="CP000239">
    <property type="protein sequence ID" value="ABC99539.1"/>
    <property type="molecule type" value="Genomic_DNA"/>
</dbReference>
<dbReference type="RefSeq" id="WP_011430217.1">
    <property type="nucleotide sequence ID" value="NC_007775.1"/>
</dbReference>
<dbReference type="SMR" id="Q2JUS3"/>
<dbReference type="STRING" id="321327.CYA_1368"/>
<dbReference type="KEGG" id="cya:CYA_1368"/>
<dbReference type="eggNOG" id="COG0353">
    <property type="taxonomic scope" value="Bacteria"/>
</dbReference>
<dbReference type="HOGENOM" id="CLU_060739_1_0_3"/>
<dbReference type="OrthoDB" id="9802672at2"/>
<dbReference type="Proteomes" id="UP000008818">
    <property type="component" value="Chromosome"/>
</dbReference>
<dbReference type="GO" id="GO:0003677">
    <property type="term" value="F:DNA binding"/>
    <property type="evidence" value="ECO:0007669"/>
    <property type="project" value="UniProtKB-UniRule"/>
</dbReference>
<dbReference type="GO" id="GO:0008270">
    <property type="term" value="F:zinc ion binding"/>
    <property type="evidence" value="ECO:0007669"/>
    <property type="project" value="UniProtKB-KW"/>
</dbReference>
<dbReference type="GO" id="GO:0006310">
    <property type="term" value="P:DNA recombination"/>
    <property type="evidence" value="ECO:0007669"/>
    <property type="project" value="UniProtKB-UniRule"/>
</dbReference>
<dbReference type="GO" id="GO:0006281">
    <property type="term" value="P:DNA repair"/>
    <property type="evidence" value="ECO:0007669"/>
    <property type="project" value="UniProtKB-UniRule"/>
</dbReference>
<dbReference type="CDD" id="cd01025">
    <property type="entry name" value="TOPRIM_recR"/>
    <property type="match status" value="1"/>
</dbReference>
<dbReference type="Gene3D" id="3.30.60.80">
    <property type="match status" value="1"/>
</dbReference>
<dbReference type="Gene3D" id="3.40.1360.10">
    <property type="match status" value="1"/>
</dbReference>
<dbReference type="Gene3D" id="6.10.250.240">
    <property type="match status" value="1"/>
</dbReference>
<dbReference type="Gene3D" id="1.10.8.420">
    <property type="entry name" value="RecR Domain 1"/>
    <property type="match status" value="1"/>
</dbReference>
<dbReference type="HAMAP" id="MF_00017">
    <property type="entry name" value="RecR"/>
    <property type="match status" value="1"/>
</dbReference>
<dbReference type="InterPro" id="IPR000093">
    <property type="entry name" value="DNA_Rcmb_RecR"/>
</dbReference>
<dbReference type="InterPro" id="IPR003583">
    <property type="entry name" value="Hlx-hairpin-Hlx_DNA-bd_motif"/>
</dbReference>
<dbReference type="InterPro" id="IPR023627">
    <property type="entry name" value="Rcmb_RecR"/>
</dbReference>
<dbReference type="InterPro" id="IPR015967">
    <property type="entry name" value="Rcmb_RecR_Znf"/>
</dbReference>
<dbReference type="InterPro" id="IPR006171">
    <property type="entry name" value="TOPRIM_dom"/>
</dbReference>
<dbReference type="InterPro" id="IPR034137">
    <property type="entry name" value="TOPRIM_RecR"/>
</dbReference>
<dbReference type="NCBIfam" id="TIGR00615">
    <property type="entry name" value="recR"/>
    <property type="match status" value="1"/>
</dbReference>
<dbReference type="PANTHER" id="PTHR30446">
    <property type="entry name" value="RECOMBINATION PROTEIN RECR"/>
    <property type="match status" value="1"/>
</dbReference>
<dbReference type="PANTHER" id="PTHR30446:SF0">
    <property type="entry name" value="RECOMBINATION PROTEIN RECR"/>
    <property type="match status" value="1"/>
</dbReference>
<dbReference type="Pfam" id="PF21175">
    <property type="entry name" value="RecR_C"/>
    <property type="match status" value="1"/>
</dbReference>
<dbReference type="Pfam" id="PF21176">
    <property type="entry name" value="RecR_HhH"/>
    <property type="match status" value="1"/>
</dbReference>
<dbReference type="Pfam" id="PF02132">
    <property type="entry name" value="RecR_ZnF"/>
    <property type="match status" value="1"/>
</dbReference>
<dbReference type="Pfam" id="PF13662">
    <property type="entry name" value="Toprim_4"/>
    <property type="match status" value="1"/>
</dbReference>
<dbReference type="SMART" id="SM00278">
    <property type="entry name" value="HhH1"/>
    <property type="match status" value="1"/>
</dbReference>
<dbReference type="SMART" id="SM00493">
    <property type="entry name" value="TOPRIM"/>
    <property type="match status" value="1"/>
</dbReference>
<dbReference type="SUPFAM" id="SSF111304">
    <property type="entry name" value="Recombination protein RecR"/>
    <property type="match status" value="1"/>
</dbReference>
<dbReference type="PROSITE" id="PS01300">
    <property type="entry name" value="RECR"/>
    <property type="match status" value="1"/>
</dbReference>
<dbReference type="PROSITE" id="PS50880">
    <property type="entry name" value="TOPRIM"/>
    <property type="match status" value="1"/>
</dbReference>
<organism>
    <name type="scientific">Synechococcus sp. (strain JA-3-3Ab)</name>
    <name type="common">Cyanobacteria bacterium Yellowstone A-Prime</name>
    <dbReference type="NCBI Taxonomy" id="321327"/>
    <lineage>
        <taxon>Bacteria</taxon>
        <taxon>Bacillati</taxon>
        <taxon>Cyanobacteriota</taxon>
        <taxon>Cyanophyceae</taxon>
        <taxon>Synechococcales</taxon>
        <taxon>Synechococcaceae</taxon>
        <taxon>Synechococcus</taxon>
    </lineage>
</organism>
<sequence length="199" mass="22235">MYTRPLARLIEELQRLPGIGSKTAQRLALHLLNRPAGEVEALAKALLEAKQTVKHCSICFNWSAEDPCEICRSPQRDPSTWCVVADVKDLIAMERTREFKGLYHVLGGLISPMNGIGAEQLRIRELVARVAREKPQELIFALSPSVEGEVTMHVVKDYLKPVAPGLRMTRLAFGLPMGSELEYADEVTLARALEARQEF</sequence>
<keyword id="KW-0227">DNA damage</keyword>
<keyword id="KW-0233">DNA recombination</keyword>
<keyword id="KW-0234">DNA repair</keyword>
<keyword id="KW-0479">Metal-binding</keyword>
<keyword id="KW-0862">Zinc</keyword>
<keyword id="KW-0863">Zinc-finger</keyword>
<name>RECR_SYNJA</name>
<proteinExistence type="inferred from homology"/>
<reference key="1">
    <citation type="journal article" date="2007" name="ISME J.">
        <title>Population level functional diversity in a microbial community revealed by comparative genomic and metagenomic analyses.</title>
        <authorList>
            <person name="Bhaya D."/>
            <person name="Grossman A.R."/>
            <person name="Steunou A.-S."/>
            <person name="Khuri N."/>
            <person name="Cohan F.M."/>
            <person name="Hamamura N."/>
            <person name="Melendrez M.C."/>
            <person name="Bateson M.M."/>
            <person name="Ward D.M."/>
            <person name="Heidelberg J.F."/>
        </authorList>
    </citation>
    <scope>NUCLEOTIDE SEQUENCE [LARGE SCALE GENOMIC DNA]</scope>
    <source>
        <strain>JA-3-3Ab</strain>
    </source>
</reference>
<accession>Q2JUS3</accession>
<evidence type="ECO:0000255" key="1">
    <source>
        <dbReference type="HAMAP-Rule" id="MF_00017"/>
    </source>
</evidence>